<organism>
    <name type="scientific">Emericella nidulans (strain FGSC A4 / ATCC 38163 / CBS 112.46 / NRRL 194 / M139)</name>
    <name type="common">Aspergillus nidulans</name>
    <dbReference type="NCBI Taxonomy" id="227321"/>
    <lineage>
        <taxon>Eukaryota</taxon>
        <taxon>Fungi</taxon>
        <taxon>Dikarya</taxon>
        <taxon>Ascomycota</taxon>
        <taxon>Pezizomycotina</taxon>
        <taxon>Eurotiomycetes</taxon>
        <taxon>Eurotiomycetidae</taxon>
        <taxon>Eurotiales</taxon>
        <taxon>Aspergillaceae</taxon>
        <taxon>Aspergillus</taxon>
        <taxon>Aspergillus subgen. Nidulantes</taxon>
    </lineage>
</organism>
<proteinExistence type="inferred from homology"/>
<name>BCP1_EMENI</name>
<reference key="1">
    <citation type="journal article" date="2005" name="Nature">
        <title>Sequencing of Aspergillus nidulans and comparative analysis with A. fumigatus and A. oryzae.</title>
        <authorList>
            <person name="Galagan J.E."/>
            <person name="Calvo S.E."/>
            <person name="Cuomo C."/>
            <person name="Ma L.-J."/>
            <person name="Wortman J.R."/>
            <person name="Batzoglou S."/>
            <person name="Lee S.-I."/>
            <person name="Bastuerkmen M."/>
            <person name="Spevak C.C."/>
            <person name="Clutterbuck J."/>
            <person name="Kapitonov V."/>
            <person name="Jurka J."/>
            <person name="Scazzocchio C."/>
            <person name="Farman M.L."/>
            <person name="Butler J."/>
            <person name="Purcell S."/>
            <person name="Harris S."/>
            <person name="Braus G.H."/>
            <person name="Draht O."/>
            <person name="Busch S."/>
            <person name="D'Enfert C."/>
            <person name="Bouchier C."/>
            <person name="Goldman G.H."/>
            <person name="Bell-Pedersen D."/>
            <person name="Griffiths-Jones S."/>
            <person name="Doonan J.H."/>
            <person name="Yu J."/>
            <person name="Vienken K."/>
            <person name="Pain A."/>
            <person name="Freitag M."/>
            <person name="Selker E.U."/>
            <person name="Archer D.B."/>
            <person name="Penalva M.A."/>
            <person name="Oakley B.R."/>
            <person name="Momany M."/>
            <person name="Tanaka T."/>
            <person name="Kumagai T."/>
            <person name="Asai K."/>
            <person name="Machida M."/>
            <person name="Nierman W.C."/>
            <person name="Denning D.W."/>
            <person name="Caddick M.X."/>
            <person name="Hynes M."/>
            <person name="Paoletti M."/>
            <person name="Fischer R."/>
            <person name="Miller B.L."/>
            <person name="Dyer P.S."/>
            <person name="Sachs M.S."/>
            <person name="Osmani S.A."/>
            <person name="Birren B.W."/>
        </authorList>
    </citation>
    <scope>NUCLEOTIDE SEQUENCE [LARGE SCALE GENOMIC DNA]</scope>
    <source>
        <strain>FGSC A4 / ATCC 38163 / CBS 112.46 / NRRL 194 / M139</strain>
    </source>
</reference>
<reference key="2">
    <citation type="journal article" date="2009" name="Fungal Genet. Biol.">
        <title>The 2008 update of the Aspergillus nidulans genome annotation: a community effort.</title>
        <authorList>
            <person name="Wortman J.R."/>
            <person name="Gilsenan J.M."/>
            <person name="Joardar V."/>
            <person name="Deegan J."/>
            <person name="Clutterbuck J."/>
            <person name="Andersen M.R."/>
            <person name="Archer D."/>
            <person name="Bencina M."/>
            <person name="Braus G."/>
            <person name="Coutinho P."/>
            <person name="von Dohren H."/>
            <person name="Doonan J."/>
            <person name="Driessen A.J."/>
            <person name="Durek P."/>
            <person name="Espeso E."/>
            <person name="Fekete E."/>
            <person name="Flipphi M."/>
            <person name="Estrada C.G."/>
            <person name="Geysens S."/>
            <person name="Goldman G."/>
            <person name="de Groot P.W."/>
            <person name="Hansen K."/>
            <person name="Harris S.D."/>
            <person name="Heinekamp T."/>
            <person name="Helmstaedt K."/>
            <person name="Henrissat B."/>
            <person name="Hofmann G."/>
            <person name="Homan T."/>
            <person name="Horio T."/>
            <person name="Horiuchi H."/>
            <person name="James S."/>
            <person name="Jones M."/>
            <person name="Karaffa L."/>
            <person name="Karanyi Z."/>
            <person name="Kato M."/>
            <person name="Keller N."/>
            <person name="Kelly D.E."/>
            <person name="Kiel J.A."/>
            <person name="Kim J.M."/>
            <person name="van der Klei I.J."/>
            <person name="Klis F.M."/>
            <person name="Kovalchuk A."/>
            <person name="Krasevec N."/>
            <person name="Kubicek C.P."/>
            <person name="Liu B."/>
            <person name="Maccabe A."/>
            <person name="Meyer V."/>
            <person name="Mirabito P."/>
            <person name="Miskei M."/>
            <person name="Mos M."/>
            <person name="Mullins J."/>
            <person name="Nelson D.R."/>
            <person name="Nielsen J."/>
            <person name="Oakley B.R."/>
            <person name="Osmani S.A."/>
            <person name="Pakula T."/>
            <person name="Paszewski A."/>
            <person name="Paulsen I."/>
            <person name="Pilsyk S."/>
            <person name="Pocsi I."/>
            <person name="Punt P.J."/>
            <person name="Ram A.F."/>
            <person name="Ren Q."/>
            <person name="Robellet X."/>
            <person name="Robson G."/>
            <person name="Seiboth B."/>
            <person name="van Solingen P."/>
            <person name="Specht T."/>
            <person name="Sun J."/>
            <person name="Taheri-Talesh N."/>
            <person name="Takeshita N."/>
            <person name="Ussery D."/>
            <person name="vanKuyk P.A."/>
            <person name="Visser H."/>
            <person name="van de Vondervoort P.J."/>
            <person name="de Vries R.P."/>
            <person name="Walton J."/>
            <person name="Xiang X."/>
            <person name="Xiong Y."/>
            <person name="Zeng A.P."/>
            <person name="Brandt B.W."/>
            <person name="Cornell M.J."/>
            <person name="van den Hondel C.A."/>
            <person name="Visser J."/>
            <person name="Oliver S.G."/>
            <person name="Turner G."/>
        </authorList>
    </citation>
    <scope>GENOME REANNOTATION</scope>
    <source>
        <strain>FGSC A4 / ATCC 38163 / CBS 112.46 / NRRL 194 / M139</strain>
    </source>
</reference>
<comment type="function">
    <text evidence="1">Involved in nuclear export, actin cytoskeleton organization and vesicular transport.</text>
</comment>
<comment type="subcellular location">
    <subcellularLocation>
        <location evidence="2">Cytoplasm</location>
    </subcellularLocation>
    <subcellularLocation>
        <location evidence="2">Nucleus</location>
    </subcellularLocation>
</comment>
<comment type="similarity">
    <text evidence="4">Belongs to the BCP1 family.</text>
</comment>
<protein>
    <recommendedName>
        <fullName>Protein bcp1</fullName>
    </recommendedName>
</protein>
<dbReference type="EMBL" id="AACD01000113">
    <property type="protein sequence ID" value="EAA58264.1"/>
    <property type="molecule type" value="Genomic_DNA"/>
</dbReference>
<dbReference type="EMBL" id="BN001301">
    <property type="protein sequence ID" value="CBF71620.1"/>
    <property type="molecule type" value="Genomic_DNA"/>
</dbReference>
<dbReference type="RefSeq" id="XP_664469.1">
    <property type="nucleotide sequence ID" value="XM_659377.1"/>
</dbReference>
<dbReference type="SMR" id="Q5AXW5"/>
<dbReference type="FunCoup" id="Q5AXW5">
    <property type="interactions" value="959"/>
</dbReference>
<dbReference type="STRING" id="227321.Q5AXW5"/>
<dbReference type="EnsemblFungi" id="CBF71620">
    <property type="protein sequence ID" value="CBF71620"/>
    <property type="gene ID" value="ANIA_06865"/>
</dbReference>
<dbReference type="KEGG" id="ani:ANIA_06865"/>
<dbReference type="VEuPathDB" id="FungiDB:AN6865"/>
<dbReference type="eggNOG" id="KOG3034">
    <property type="taxonomic scope" value="Eukaryota"/>
</dbReference>
<dbReference type="HOGENOM" id="CLU_068770_2_0_1"/>
<dbReference type="InParanoid" id="Q5AXW5"/>
<dbReference type="OMA" id="VKFYRKE"/>
<dbReference type="OrthoDB" id="27543at2759"/>
<dbReference type="Proteomes" id="UP000000560">
    <property type="component" value="Chromosome I"/>
</dbReference>
<dbReference type="GO" id="GO:0005737">
    <property type="term" value="C:cytoplasm"/>
    <property type="evidence" value="ECO:0007669"/>
    <property type="project" value="UniProtKB-SubCell"/>
</dbReference>
<dbReference type="GO" id="GO:0005634">
    <property type="term" value="C:nucleus"/>
    <property type="evidence" value="ECO:0000318"/>
    <property type="project" value="GO_Central"/>
</dbReference>
<dbReference type="GO" id="GO:0015031">
    <property type="term" value="P:protein transport"/>
    <property type="evidence" value="ECO:0007669"/>
    <property type="project" value="UniProtKB-KW"/>
</dbReference>
<dbReference type="InterPro" id="IPR025602">
    <property type="entry name" value="BCP1_family"/>
</dbReference>
<dbReference type="PANTHER" id="PTHR13261">
    <property type="entry name" value="BRCA2 AND CDKN1A INTERACTING PROTEIN"/>
    <property type="match status" value="1"/>
</dbReference>
<dbReference type="PANTHER" id="PTHR13261:SF0">
    <property type="entry name" value="BRCA2 AND CDKN1A-INTERACTING PROTEIN"/>
    <property type="match status" value="1"/>
</dbReference>
<dbReference type="Pfam" id="PF13862">
    <property type="entry name" value="BCCIP"/>
    <property type="match status" value="1"/>
</dbReference>
<dbReference type="PIRSF" id="PIRSF028983">
    <property type="entry name" value="BCP1"/>
    <property type="match status" value="1"/>
</dbReference>
<gene>
    <name type="primary">bcp1</name>
    <name type="ORF">AN6865</name>
</gene>
<keyword id="KW-0963">Cytoplasm</keyword>
<keyword id="KW-0539">Nucleus</keyword>
<keyword id="KW-0653">Protein transport</keyword>
<keyword id="KW-1185">Reference proteome</keyword>
<keyword id="KW-0813">Transport</keyword>
<accession>Q5AXW5</accession>
<accession>C8V2P2</accession>
<evidence type="ECO:0000250" key="1"/>
<evidence type="ECO:0000250" key="2">
    <source>
        <dbReference type="UniProtKB" id="Q06338"/>
    </source>
</evidence>
<evidence type="ECO:0000256" key="3">
    <source>
        <dbReference type="SAM" id="MobiDB-lite"/>
    </source>
</evidence>
<evidence type="ECO:0000305" key="4"/>
<feature type="chain" id="PRO_0000249702" description="Protein bcp1">
    <location>
        <begin position="1"/>
        <end position="290"/>
    </location>
</feature>
<feature type="region of interest" description="Disordered" evidence="3">
    <location>
        <begin position="1"/>
        <end position="27"/>
    </location>
</feature>
<feature type="region of interest" description="Disordered" evidence="3">
    <location>
        <begin position="197"/>
        <end position="217"/>
    </location>
</feature>
<sequence>MGKRKQIKDGDVSMGGTDPATGDSSDEDIDMVNVDFEWFDPQEIDFHGIKHLIRQLFDVDAQDLDLSGLTDMILAQPLLGSTVKTDGKDSDPYAFLTVLNLQEHADKPPIKSLTTYIKRKASGTPSLSPLAQLFSQTPIPPIGLILTERLINMPSEVVPPMYAMLQEEITWAIEEKEPYNFSHYLIVSKTYEEVESKLDAEDSRPQKKKKKAGQEKGERFFFHPEDEVLERHALCKGGYEYEHKHDEGHSDSKRAFQELGIRTAGSLILIEAGRFEGAVKEMAEYLSPQQ</sequence>